<feature type="chain" id="PRO_1000017858" description="Uridine kinase">
    <location>
        <begin position="1"/>
        <end position="214"/>
    </location>
</feature>
<feature type="binding site" evidence="1">
    <location>
        <begin position="15"/>
        <end position="22"/>
    </location>
    <ligand>
        <name>ATP</name>
        <dbReference type="ChEBI" id="CHEBI:30616"/>
    </ligand>
</feature>
<evidence type="ECO:0000255" key="1">
    <source>
        <dbReference type="HAMAP-Rule" id="MF_00551"/>
    </source>
</evidence>
<reference key="1">
    <citation type="journal article" date="2006" name="J. Bacteriol.">
        <title>Genome sequence of Aeromonas hydrophila ATCC 7966T: jack of all trades.</title>
        <authorList>
            <person name="Seshadri R."/>
            <person name="Joseph S.W."/>
            <person name="Chopra A.K."/>
            <person name="Sha J."/>
            <person name="Shaw J."/>
            <person name="Graf J."/>
            <person name="Haft D.H."/>
            <person name="Wu M."/>
            <person name="Ren Q."/>
            <person name="Rosovitz M.J."/>
            <person name="Madupu R."/>
            <person name="Tallon L."/>
            <person name="Kim M."/>
            <person name="Jin S."/>
            <person name="Vuong H."/>
            <person name="Stine O.C."/>
            <person name="Ali A."/>
            <person name="Horneman A.J."/>
            <person name="Heidelberg J.F."/>
        </authorList>
    </citation>
    <scope>NUCLEOTIDE SEQUENCE [LARGE SCALE GENOMIC DNA]</scope>
    <source>
        <strain>ATCC 7966 / DSM 30187 / BCRC 13018 / CCUG 14551 / JCM 1027 / KCTC 2358 / NCIMB 9240 / NCTC 8049</strain>
    </source>
</reference>
<sequence length="214" mass="24283">MSDTQHSCVIIGIAGASASGKSLIAQTIYEELVAELGAGQIGVITEDCYYRDQTHLTMEERVKTNYDHPNALDHDLLVQHLSQLVQGDAVNIPQYSYTEHTRMSEVTPFAPRRVIILEGILLLTDSRLRDLMDASIFMDTPLDICLLRRLVRDVQERGRTMDSVLKQYQKTVRPMFLQFIEPSKQYADVIVPRGGKNRIAIDMLKARIRHMLIG</sequence>
<comment type="catalytic activity">
    <reaction evidence="1">
        <text>uridine + ATP = UMP + ADP + H(+)</text>
        <dbReference type="Rhea" id="RHEA:16825"/>
        <dbReference type="ChEBI" id="CHEBI:15378"/>
        <dbReference type="ChEBI" id="CHEBI:16704"/>
        <dbReference type="ChEBI" id="CHEBI:30616"/>
        <dbReference type="ChEBI" id="CHEBI:57865"/>
        <dbReference type="ChEBI" id="CHEBI:456216"/>
        <dbReference type="EC" id="2.7.1.48"/>
    </reaction>
</comment>
<comment type="catalytic activity">
    <reaction evidence="1">
        <text>cytidine + ATP = CMP + ADP + H(+)</text>
        <dbReference type="Rhea" id="RHEA:24674"/>
        <dbReference type="ChEBI" id="CHEBI:15378"/>
        <dbReference type="ChEBI" id="CHEBI:17562"/>
        <dbReference type="ChEBI" id="CHEBI:30616"/>
        <dbReference type="ChEBI" id="CHEBI:60377"/>
        <dbReference type="ChEBI" id="CHEBI:456216"/>
        <dbReference type="EC" id="2.7.1.48"/>
    </reaction>
</comment>
<comment type="pathway">
    <text evidence="1">Pyrimidine metabolism; CTP biosynthesis via salvage pathway; CTP from cytidine: step 1/3.</text>
</comment>
<comment type="pathway">
    <text evidence="1">Pyrimidine metabolism; UMP biosynthesis via salvage pathway; UMP from uridine: step 1/1.</text>
</comment>
<comment type="subcellular location">
    <subcellularLocation>
        <location evidence="1">Cytoplasm</location>
    </subcellularLocation>
</comment>
<comment type="similarity">
    <text evidence="1">Belongs to the uridine kinase family.</text>
</comment>
<gene>
    <name evidence="1" type="primary">udk</name>
    <name type="ordered locus">AHA_2235</name>
</gene>
<accession>A0KKF8</accession>
<name>URK_AERHH</name>
<dbReference type="EC" id="2.7.1.48" evidence="1"/>
<dbReference type="EMBL" id="CP000462">
    <property type="protein sequence ID" value="ABK36656.1"/>
    <property type="molecule type" value="Genomic_DNA"/>
</dbReference>
<dbReference type="RefSeq" id="WP_011706091.1">
    <property type="nucleotide sequence ID" value="NC_008570.1"/>
</dbReference>
<dbReference type="RefSeq" id="YP_856759.1">
    <property type="nucleotide sequence ID" value="NC_008570.1"/>
</dbReference>
<dbReference type="SMR" id="A0KKF8"/>
<dbReference type="STRING" id="380703.AHA_2235"/>
<dbReference type="EnsemblBacteria" id="ABK36656">
    <property type="protein sequence ID" value="ABK36656"/>
    <property type="gene ID" value="AHA_2235"/>
</dbReference>
<dbReference type="GeneID" id="4489274"/>
<dbReference type="KEGG" id="aha:AHA_2235"/>
<dbReference type="PATRIC" id="fig|380703.7.peg.2236"/>
<dbReference type="eggNOG" id="COG0572">
    <property type="taxonomic scope" value="Bacteria"/>
</dbReference>
<dbReference type="HOGENOM" id="CLU_021278_1_2_6"/>
<dbReference type="OrthoDB" id="9777642at2"/>
<dbReference type="UniPathway" id="UPA00574">
    <property type="reaction ID" value="UER00637"/>
</dbReference>
<dbReference type="UniPathway" id="UPA00579">
    <property type="reaction ID" value="UER00640"/>
</dbReference>
<dbReference type="Proteomes" id="UP000000756">
    <property type="component" value="Chromosome"/>
</dbReference>
<dbReference type="GO" id="GO:0005737">
    <property type="term" value="C:cytoplasm"/>
    <property type="evidence" value="ECO:0007669"/>
    <property type="project" value="UniProtKB-SubCell"/>
</dbReference>
<dbReference type="GO" id="GO:0005524">
    <property type="term" value="F:ATP binding"/>
    <property type="evidence" value="ECO:0007669"/>
    <property type="project" value="UniProtKB-UniRule"/>
</dbReference>
<dbReference type="GO" id="GO:0043771">
    <property type="term" value="F:cytidine kinase activity"/>
    <property type="evidence" value="ECO:0007669"/>
    <property type="project" value="RHEA"/>
</dbReference>
<dbReference type="GO" id="GO:0004849">
    <property type="term" value="F:uridine kinase activity"/>
    <property type="evidence" value="ECO:0007669"/>
    <property type="project" value="UniProtKB-UniRule"/>
</dbReference>
<dbReference type="GO" id="GO:0044211">
    <property type="term" value="P:CTP salvage"/>
    <property type="evidence" value="ECO:0007669"/>
    <property type="project" value="UniProtKB-UniRule"/>
</dbReference>
<dbReference type="GO" id="GO:0044206">
    <property type="term" value="P:UMP salvage"/>
    <property type="evidence" value="ECO:0007669"/>
    <property type="project" value="UniProtKB-UniRule"/>
</dbReference>
<dbReference type="CDD" id="cd02023">
    <property type="entry name" value="UMPK"/>
    <property type="match status" value="1"/>
</dbReference>
<dbReference type="Gene3D" id="3.40.50.300">
    <property type="entry name" value="P-loop containing nucleotide triphosphate hydrolases"/>
    <property type="match status" value="1"/>
</dbReference>
<dbReference type="HAMAP" id="MF_00551">
    <property type="entry name" value="Uridine_kinase"/>
    <property type="match status" value="1"/>
</dbReference>
<dbReference type="InterPro" id="IPR027417">
    <property type="entry name" value="P-loop_NTPase"/>
</dbReference>
<dbReference type="InterPro" id="IPR006083">
    <property type="entry name" value="PRK/URK"/>
</dbReference>
<dbReference type="InterPro" id="IPR026008">
    <property type="entry name" value="Uridine_kinase"/>
</dbReference>
<dbReference type="InterPro" id="IPR000764">
    <property type="entry name" value="Uridine_kinase-like"/>
</dbReference>
<dbReference type="NCBIfam" id="NF004018">
    <property type="entry name" value="PRK05480.1"/>
    <property type="match status" value="1"/>
</dbReference>
<dbReference type="NCBIfam" id="TIGR00235">
    <property type="entry name" value="udk"/>
    <property type="match status" value="1"/>
</dbReference>
<dbReference type="PANTHER" id="PTHR10285">
    <property type="entry name" value="URIDINE KINASE"/>
    <property type="match status" value="1"/>
</dbReference>
<dbReference type="Pfam" id="PF00485">
    <property type="entry name" value="PRK"/>
    <property type="match status" value="1"/>
</dbReference>
<dbReference type="PRINTS" id="PR00988">
    <property type="entry name" value="URIDINKINASE"/>
</dbReference>
<dbReference type="SUPFAM" id="SSF52540">
    <property type="entry name" value="P-loop containing nucleoside triphosphate hydrolases"/>
    <property type="match status" value="1"/>
</dbReference>
<keyword id="KW-0067">ATP-binding</keyword>
<keyword id="KW-0963">Cytoplasm</keyword>
<keyword id="KW-0418">Kinase</keyword>
<keyword id="KW-0547">Nucleotide-binding</keyword>
<keyword id="KW-1185">Reference proteome</keyword>
<keyword id="KW-0808">Transferase</keyword>
<organism>
    <name type="scientific">Aeromonas hydrophila subsp. hydrophila (strain ATCC 7966 / DSM 30187 / BCRC 13018 / CCUG 14551 / JCM 1027 / KCTC 2358 / NCIMB 9240 / NCTC 8049)</name>
    <dbReference type="NCBI Taxonomy" id="380703"/>
    <lineage>
        <taxon>Bacteria</taxon>
        <taxon>Pseudomonadati</taxon>
        <taxon>Pseudomonadota</taxon>
        <taxon>Gammaproteobacteria</taxon>
        <taxon>Aeromonadales</taxon>
        <taxon>Aeromonadaceae</taxon>
        <taxon>Aeromonas</taxon>
    </lineage>
</organism>
<proteinExistence type="inferred from homology"/>
<protein>
    <recommendedName>
        <fullName evidence="1">Uridine kinase</fullName>
        <ecNumber evidence="1">2.7.1.48</ecNumber>
    </recommendedName>
    <alternativeName>
        <fullName evidence="1">Cytidine monophosphokinase</fullName>
    </alternativeName>
    <alternativeName>
        <fullName evidence="1">Uridine monophosphokinase</fullName>
    </alternativeName>
</protein>